<proteinExistence type="inferred from homology"/>
<dbReference type="EMBL" id="CP000416">
    <property type="protein sequence ID" value="ABJ64755.1"/>
    <property type="molecule type" value="Genomic_DNA"/>
</dbReference>
<dbReference type="RefSeq" id="WP_011668489.1">
    <property type="nucleotide sequence ID" value="NC_008497.1"/>
</dbReference>
<dbReference type="SMR" id="Q03PW7"/>
<dbReference type="STRING" id="387344.LVIS_1680"/>
<dbReference type="GeneID" id="56993541"/>
<dbReference type="KEGG" id="lbr:LVIS_1680"/>
<dbReference type="eggNOG" id="COG0093">
    <property type="taxonomic scope" value="Bacteria"/>
</dbReference>
<dbReference type="HOGENOM" id="CLU_095071_2_1_9"/>
<dbReference type="Proteomes" id="UP000001652">
    <property type="component" value="Chromosome"/>
</dbReference>
<dbReference type="GO" id="GO:0022625">
    <property type="term" value="C:cytosolic large ribosomal subunit"/>
    <property type="evidence" value="ECO:0007669"/>
    <property type="project" value="TreeGrafter"/>
</dbReference>
<dbReference type="GO" id="GO:0070180">
    <property type="term" value="F:large ribosomal subunit rRNA binding"/>
    <property type="evidence" value="ECO:0007669"/>
    <property type="project" value="TreeGrafter"/>
</dbReference>
<dbReference type="GO" id="GO:0003735">
    <property type="term" value="F:structural constituent of ribosome"/>
    <property type="evidence" value="ECO:0007669"/>
    <property type="project" value="InterPro"/>
</dbReference>
<dbReference type="GO" id="GO:0006412">
    <property type="term" value="P:translation"/>
    <property type="evidence" value="ECO:0007669"/>
    <property type="project" value="UniProtKB-UniRule"/>
</dbReference>
<dbReference type="CDD" id="cd00337">
    <property type="entry name" value="Ribosomal_uL14"/>
    <property type="match status" value="1"/>
</dbReference>
<dbReference type="FunFam" id="2.40.150.20:FF:000001">
    <property type="entry name" value="50S ribosomal protein L14"/>
    <property type="match status" value="1"/>
</dbReference>
<dbReference type="Gene3D" id="2.40.150.20">
    <property type="entry name" value="Ribosomal protein L14"/>
    <property type="match status" value="1"/>
</dbReference>
<dbReference type="HAMAP" id="MF_01367">
    <property type="entry name" value="Ribosomal_uL14"/>
    <property type="match status" value="1"/>
</dbReference>
<dbReference type="InterPro" id="IPR000218">
    <property type="entry name" value="Ribosomal_uL14"/>
</dbReference>
<dbReference type="InterPro" id="IPR005745">
    <property type="entry name" value="Ribosomal_uL14_bac-type"/>
</dbReference>
<dbReference type="InterPro" id="IPR019972">
    <property type="entry name" value="Ribosomal_uL14_CS"/>
</dbReference>
<dbReference type="InterPro" id="IPR036853">
    <property type="entry name" value="Ribosomal_uL14_sf"/>
</dbReference>
<dbReference type="NCBIfam" id="TIGR01067">
    <property type="entry name" value="rplN_bact"/>
    <property type="match status" value="1"/>
</dbReference>
<dbReference type="PANTHER" id="PTHR11761">
    <property type="entry name" value="50S/60S RIBOSOMAL PROTEIN L14/L23"/>
    <property type="match status" value="1"/>
</dbReference>
<dbReference type="PANTHER" id="PTHR11761:SF3">
    <property type="entry name" value="LARGE RIBOSOMAL SUBUNIT PROTEIN UL14M"/>
    <property type="match status" value="1"/>
</dbReference>
<dbReference type="Pfam" id="PF00238">
    <property type="entry name" value="Ribosomal_L14"/>
    <property type="match status" value="1"/>
</dbReference>
<dbReference type="SMART" id="SM01374">
    <property type="entry name" value="Ribosomal_L14"/>
    <property type="match status" value="1"/>
</dbReference>
<dbReference type="SUPFAM" id="SSF50193">
    <property type="entry name" value="Ribosomal protein L14"/>
    <property type="match status" value="1"/>
</dbReference>
<dbReference type="PROSITE" id="PS00049">
    <property type="entry name" value="RIBOSOMAL_L14"/>
    <property type="match status" value="1"/>
</dbReference>
<accession>Q03PW7</accession>
<gene>
    <name evidence="1" type="primary">rplN</name>
    <name type="ordered locus">LVIS_1680</name>
</gene>
<sequence>MIQQESRLKVADNSGAREILTIKVLGGSKRRYAGIGDIIVATVKQATPGGVVKKGDVVKAVVVRTKSRVRRNDGSYISFDENAAVLIKDDKSPQGTRIFGPVARELRDNDYMKIISLAPEVL</sequence>
<organism>
    <name type="scientific">Levilactobacillus brevis (strain ATCC 367 / BCRC 12310 / CIP 105137 / JCM 1170 / LMG 11437 / NCIMB 947 / NCTC 947)</name>
    <name type="common">Lactobacillus brevis</name>
    <dbReference type="NCBI Taxonomy" id="387344"/>
    <lineage>
        <taxon>Bacteria</taxon>
        <taxon>Bacillati</taxon>
        <taxon>Bacillota</taxon>
        <taxon>Bacilli</taxon>
        <taxon>Lactobacillales</taxon>
        <taxon>Lactobacillaceae</taxon>
        <taxon>Levilactobacillus</taxon>
    </lineage>
</organism>
<comment type="function">
    <text evidence="1">Binds to 23S rRNA. Forms part of two intersubunit bridges in the 70S ribosome.</text>
</comment>
<comment type="subunit">
    <text evidence="1">Part of the 50S ribosomal subunit. Forms a cluster with proteins L3 and L19. In the 70S ribosome, L14 and L19 interact and together make contacts with the 16S rRNA in bridges B5 and B8.</text>
</comment>
<comment type="similarity">
    <text evidence="1">Belongs to the universal ribosomal protein uL14 family.</text>
</comment>
<name>RL14_LEVBA</name>
<reference key="1">
    <citation type="journal article" date="2006" name="Proc. Natl. Acad. Sci. U.S.A.">
        <title>Comparative genomics of the lactic acid bacteria.</title>
        <authorList>
            <person name="Makarova K.S."/>
            <person name="Slesarev A."/>
            <person name="Wolf Y.I."/>
            <person name="Sorokin A."/>
            <person name="Mirkin B."/>
            <person name="Koonin E.V."/>
            <person name="Pavlov A."/>
            <person name="Pavlova N."/>
            <person name="Karamychev V."/>
            <person name="Polouchine N."/>
            <person name="Shakhova V."/>
            <person name="Grigoriev I."/>
            <person name="Lou Y."/>
            <person name="Rohksar D."/>
            <person name="Lucas S."/>
            <person name="Huang K."/>
            <person name="Goodstein D.M."/>
            <person name="Hawkins T."/>
            <person name="Plengvidhya V."/>
            <person name="Welker D."/>
            <person name="Hughes J."/>
            <person name="Goh Y."/>
            <person name="Benson A."/>
            <person name="Baldwin K."/>
            <person name="Lee J.-H."/>
            <person name="Diaz-Muniz I."/>
            <person name="Dosti B."/>
            <person name="Smeianov V."/>
            <person name="Wechter W."/>
            <person name="Barabote R."/>
            <person name="Lorca G."/>
            <person name="Altermann E."/>
            <person name="Barrangou R."/>
            <person name="Ganesan B."/>
            <person name="Xie Y."/>
            <person name="Rawsthorne H."/>
            <person name="Tamir D."/>
            <person name="Parker C."/>
            <person name="Breidt F."/>
            <person name="Broadbent J.R."/>
            <person name="Hutkins R."/>
            <person name="O'Sullivan D."/>
            <person name="Steele J."/>
            <person name="Unlu G."/>
            <person name="Saier M.H. Jr."/>
            <person name="Klaenhammer T."/>
            <person name="Richardson P."/>
            <person name="Kozyavkin S."/>
            <person name="Weimer B.C."/>
            <person name="Mills D.A."/>
        </authorList>
    </citation>
    <scope>NUCLEOTIDE SEQUENCE [LARGE SCALE GENOMIC DNA]</scope>
    <source>
        <strain>ATCC 367 / BCRC 12310 / CIP 105137 / JCM 1170 / LMG 11437 / NCIMB 947 / NCTC 947</strain>
    </source>
</reference>
<evidence type="ECO:0000255" key="1">
    <source>
        <dbReference type="HAMAP-Rule" id="MF_01367"/>
    </source>
</evidence>
<evidence type="ECO:0000305" key="2"/>
<keyword id="KW-1185">Reference proteome</keyword>
<keyword id="KW-0687">Ribonucleoprotein</keyword>
<keyword id="KW-0689">Ribosomal protein</keyword>
<keyword id="KW-0694">RNA-binding</keyword>
<keyword id="KW-0699">rRNA-binding</keyword>
<protein>
    <recommendedName>
        <fullName evidence="1">Large ribosomal subunit protein uL14</fullName>
    </recommendedName>
    <alternativeName>
        <fullName evidence="2">50S ribosomal protein L14</fullName>
    </alternativeName>
</protein>
<feature type="chain" id="PRO_1000055602" description="Large ribosomal subunit protein uL14">
    <location>
        <begin position="1"/>
        <end position="122"/>
    </location>
</feature>